<feature type="chain" id="PRO_1000012458" description="3-phosphoshikimate 1-carboxyvinyltransferase">
    <location>
        <begin position="1"/>
        <end position="428"/>
    </location>
</feature>
<feature type="active site" description="Proton acceptor" evidence="1">
    <location>
        <position position="314"/>
    </location>
</feature>
<feature type="binding site" evidence="1">
    <location>
        <position position="22"/>
    </location>
    <ligand>
        <name>3-phosphoshikimate</name>
        <dbReference type="ChEBI" id="CHEBI:145989"/>
    </ligand>
</feature>
<feature type="binding site" evidence="1">
    <location>
        <position position="22"/>
    </location>
    <ligand>
        <name>phosphoenolpyruvate</name>
        <dbReference type="ChEBI" id="CHEBI:58702"/>
    </ligand>
</feature>
<feature type="binding site" evidence="1">
    <location>
        <position position="23"/>
    </location>
    <ligand>
        <name>3-phosphoshikimate</name>
        <dbReference type="ChEBI" id="CHEBI:145989"/>
    </ligand>
</feature>
<feature type="binding site" evidence="1">
    <location>
        <position position="27"/>
    </location>
    <ligand>
        <name>3-phosphoshikimate</name>
        <dbReference type="ChEBI" id="CHEBI:145989"/>
    </ligand>
</feature>
<feature type="binding site" evidence="1">
    <location>
        <position position="96"/>
    </location>
    <ligand>
        <name>phosphoenolpyruvate</name>
        <dbReference type="ChEBI" id="CHEBI:58702"/>
    </ligand>
</feature>
<feature type="binding site" evidence="1">
    <location>
        <position position="124"/>
    </location>
    <ligand>
        <name>phosphoenolpyruvate</name>
        <dbReference type="ChEBI" id="CHEBI:58702"/>
    </ligand>
</feature>
<feature type="binding site" evidence="1">
    <location>
        <position position="170"/>
    </location>
    <ligand>
        <name>3-phosphoshikimate</name>
        <dbReference type="ChEBI" id="CHEBI:145989"/>
    </ligand>
</feature>
<feature type="binding site" evidence="1">
    <location>
        <position position="171"/>
    </location>
    <ligand>
        <name>3-phosphoshikimate</name>
        <dbReference type="ChEBI" id="CHEBI:145989"/>
    </ligand>
</feature>
<feature type="binding site" evidence="1">
    <location>
        <position position="172"/>
    </location>
    <ligand>
        <name>3-phosphoshikimate</name>
        <dbReference type="ChEBI" id="CHEBI:145989"/>
    </ligand>
</feature>
<feature type="binding site" evidence="1">
    <location>
        <position position="172"/>
    </location>
    <ligand>
        <name>phosphoenolpyruvate</name>
        <dbReference type="ChEBI" id="CHEBI:58702"/>
    </ligand>
</feature>
<feature type="binding site" evidence="1">
    <location>
        <position position="198"/>
    </location>
    <ligand>
        <name>3-phosphoshikimate</name>
        <dbReference type="ChEBI" id="CHEBI:145989"/>
    </ligand>
</feature>
<feature type="binding site" evidence="1">
    <location>
        <position position="314"/>
    </location>
    <ligand>
        <name>3-phosphoshikimate</name>
        <dbReference type="ChEBI" id="CHEBI:145989"/>
    </ligand>
</feature>
<feature type="binding site" evidence="1">
    <location>
        <position position="337"/>
    </location>
    <ligand>
        <name>3-phosphoshikimate</name>
        <dbReference type="ChEBI" id="CHEBI:145989"/>
    </ligand>
</feature>
<feature type="binding site" evidence="1">
    <location>
        <position position="341"/>
    </location>
    <ligand>
        <name>3-phosphoshikimate</name>
        <dbReference type="ChEBI" id="CHEBI:145989"/>
    </ligand>
</feature>
<feature type="binding site" evidence="1">
    <location>
        <position position="345"/>
    </location>
    <ligand>
        <name>phosphoenolpyruvate</name>
        <dbReference type="ChEBI" id="CHEBI:58702"/>
    </ligand>
</feature>
<feature type="binding site" evidence="1">
    <location>
        <position position="387"/>
    </location>
    <ligand>
        <name>phosphoenolpyruvate</name>
        <dbReference type="ChEBI" id="CHEBI:58702"/>
    </ligand>
</feature>
<feature type="binding site" evidence="1">
    <location>
        <position position="412"/>
    </location>
    <ligand>
        <name>phosphoenolpyruvate</name>
        <dbReference type="ChEBI" id="CHEBI:58702"/>
    </ligand>
</feature>
<reference key="1">
    <citation type="journal article" date="2005" name="Science">
        <title>Life at depth: Photobacterium profundum genome sequence and expression analysis.</title>
        <authorList>
            <person name="Vezzi A."/>
            <person name="Campanaro S."/>
            <person name="D'Angelo M."/>
            <person name="Simonato F."/>
            <person name="Vitulo N."/>
            <person name="Lauro F.M."/>
            <person name="Cestaro A."/>
            <person name="Malacrida G."/>
            <person name="Simionati B."/>
            <person name="Cannata N."/>
            <person name="Romualdi C."/>
            <person name="Bartlett D.H."/>
            <person name="Valle G."/>
        </authorList>
    </citation>
    <scope>NUCLEOTIDE SEQUENCE [LARGE SCALE GENOMIC DNA]</scope>
    <source>
        <strain>ATCC BAA-1253 / SS9</strain>
    </source>
</reference>
<accession>Q6LPE1</accession>
<keyword id="KW-0028">Amino-acid biosynthesis</keyword>
<keyword id="KW-0057">Aromatic amino acid biosynthesis</keyword>
<keyword id="KW-0963">Cytoplasm</keyword>
<keyword id="KW-1185">Reference proteome</keyword>
<keyword id="KW-0808">Transferase</keyword>
<gene>
    <name evidence="1" type="primary">aroA</name>
    <name type="ordered locus">PBPRA2452</name>
</gene>
<organism>
    <name type="scientific">Photobacterium profundum (strain SS9)</name>
    <dbReference type="NCBI Taxonomy" id="298386"/>
    <lineage>
        <taxon>Bacteria</taxon>
        <taxon>Pseudomonadati</taxon>
        <taxon>Pseudomonadota</taxon>
        <taxon>Gammaproteobacteria</taxon>
        <taxon>Vibrionales</taxon>
        <taxon>Vibrionaceae</taxon>
        <taxon>Photobacterium</taxon>
    </lineage>
</organism>
<evidence type="ECO:0000255" key="1">
    <source>
        <dbReference type="HAMAP-Rule" id="MF_00210"/>
    </source>
</evidence>
<dbReference type="EC" id="2.5.1.19" evidence="1"/>
<dbReference type="EMBL" id="CR378671">
    <property type="protein sequence ID" value="CAG20835.1"/>
    <property type="molecule type" value="Genomic_DNA"/>
</dbReference>
<dbReference type="RefSeq" id="WP_011219118.1">
    <property type="nucleotide sequence ID" value="NC_006370.1"/>
</dbReference>
<dbReference type="SMR" id="Q6LPE1"/>
<dbReference type="STRING" id="298386.PBPRA2452"/>
<dbReference type="KEGG" id="ppr:PBPRA2452"/>
<dbReference type="eggNOG" id="COG0128">
    <property type="taxonomic scope" value="Bacteria"/>
</dbReference>
<dbReference type="HOGENOM" id="CLU_024321_0_0_6"/>
<dbReference type="UniPathway" id="UPA00053">
    <property type="reaction ID" value="UER00089"/>
</dbReference>
<dbReference type="Proteomes" id="UP000000593">
    <property type="component" value="Chromosome 1"/>
</dbReference>
<dbReference type="GO" id="GO:0005737">
    <property type="term" value="C:cytoplasm"/>
    <property type="evidence" value="ECO:0007669"/>
    <property type="project" value="UniProtKB-SubCell"/>
</dbReference>
<dbReference type="GO" id="GO:0003866">
    <property type="term" value="F:3-phosphoshikimate 1-carboxyvinyltransferase activity"/>
    <property type="evidence" value="ECO:0007669"/>
    <property type="project" value="UniProtKB-UniRule"/>
</dbReference>
<dbReference type="GO" id="GO:0008652">
    <property type="term" value="P:amino acid biosynthetic process"/>
    <property type="evidence" value="ECO:0007669"/>
    <property type="project" value="UniProtKB-KW"/>
</dbReference>
<dbReference type="GO" id="GO:0009073">
    <property type="term" value="P:aromatic amino acid family biosynthetic process"/>
    <property type="evidence" value="ECO:0007669"/>
    <property type="project" value="UniProtKB-KW"/>
</dbReference>
<dbReference type="GO" id="GO:0009423">
    <property type="term" value="P:chorismate biosynthetic process"/>
    <property type="evidence" value="ECO:0007669"/>
    <property type="project" value="UniProtKB-UniRule"/>
</dbReference>
<dbReference type="CDD" id="cd01556">
    <property type="entry name" value="EPSP_synthase"/>
    <property type="match status" value="1"/>
</dbReference>
<dbReference type="FunFam" id="3.65.10.10:FF:000003">
    <property type="entry name" value="3-phosphoshikimate 1-carboxyvinyltransferase"/>
    <property type="match status" value="1"/>
</dbReference>
<dbReference type="FunFam" id="3.65.10.10:FF:000004">
    <property type="entry name" value="3-phosphoshikimate 1-carboxyvinyltransferase"/>
    <property type="match status" value="1"/>
</dbReference>
<dbReference type="Gene3D" id="3.65.10.10">
    <property type="entry name" value="Enolpyruvate transferase domain"/>
    <property type="match status" value="2"/>
</dbReference>
<dbReference type="HAMAP" id="MF_00210">
    <property type="entry name" value="EPSP_synth"/>
    <property type="match status" value="1"/>
</dbReference>
<dbReference type="InterPro" id="IPR001986">
    <property type="entry name" value="Enolpyruvate_Tfrase_dom"/>
</dbReference>
<dbReference type="InterPro" id="IPR036968">
    <property type="entry name" value="Enolpyruvate_Tfrase_sf"/>
</dbReference>
<dbReference type="InterPro" id="IPR006264">
    <property type="entry name" value="EPSP_synthase"/>
</dbReference>
<dbReference type="InterPro" id="IPR023193">
    <property type="entry name" value="EPSP_synthase_CS"/>
</dbReference>
<dbReference type="InterPro" id="IPR013792">
    <property type="entry name" value="RNA3'P_cycl/enolpyr_Trfase_a/b"/>
</dbReference>
<dbReference type="NCBIfam" id="TIGR01356">
    <property type="entry name" value="aroA"/>
    <property type="match status" value="1"/>
</dbReference>
<dbReference type="PANTHER" id="PTHR21090">
    <property type="entry name" value="AROM/DEHYDROQUINATE SYNTHASE"/>
    <property type="match status" value="1"/>
</dbReference>
<dbReference type="PANTHER" id="PTHR21090:SF5">
    <property type="entry name" value="PENTAFUNCTIONAL AROM POLYPEPTIDE"/>
    <property type="match status" value="1"/>
</dbReference>
<dbReference type="Pfam" id="PF00275">
    <property type="entry name" value="EPSP_synthase"/>
    <property type="match status" value="1"/>
</dbReference>
<dbReference type="PIRSF" id="PIRSF000505">
    <property type="entry name" value="EPSPS"/>
    <property type="match status" value="1"/>
</dbReference>
<dbReference type="SUPFAM" id="SSF55205">
    <property type="entry name" value="EPT/RTPC-like"/>
    <property type="match status" value="1"/>
</dbReference>
<dbReference type="PROSITE" id="PS00104">
    <property type="entry name" value="EPSP_SYNTHASE_1"/>
    <property type="match status" value="1"/>
</dbReference>
<dbReference type="PROSITE" id="PS00885">
    <property type="entry name" value="EPSP_SYNTHASE_2"/>
    <property type="match status" value="1"/>
</dbReference>
<name>AROA_PHOPR</name>
<proteinExistence type="inferred from homology"/>
<protein>
    <recommendedName>
        <fullName evidence="1">3-phosphoshikimate 1-carboxyvinyltransferase</fullName>
        <ecNumber evidence="1">2.5.1.19</ecNumber>
    </recommendedName>
    <alternativeName>
        <fullName evidence="1">5-enolpyruvylshikimate-3-phosphate synthase</fullName>
        <shortName evidence="1">EPSP synthase</shortName>
        <shortName evidence="1">EPSPS</shortName>
    </alternativeName>
</protein>
<comment type="function">
    <text evidence="1">Catalyzes the transfer of the enolpyruvyl moiety of phosphoenolpyruvate (PEP) to the 5-hydroxyl of shikimate-3-phosphate (S3P) to produce enolpyruvyl shikimate-3-phosphate and inorganic phosphate.</text>
</comment>
<comment type="catalytic activity">
    <reaction evidence="1">
        <text>3-phosphoshikimate + phosphoenolpyruvate = 5-O-(1-carboxyvinyl)-3-phosphoshikimate + phosphate</text>
        <dbReference type="Rhea" id="RHEA:21256"/>
        <dbReference type="ChEBI" id="CHEBI:43474"/>
        <dbReference type="ChEBI" id="CHEBI:57701"/>
        <dbReference type="ChEBI" id="CHEBI:58702"/>
        <dbReference type="ChEBI" id="CHEBI:145989"/>
        <dbReference type="EC" id="2.5.1.19"/>
    </reaction>
    <physiologicalReaction direction="left-to-right" evidence="1">
        <dbReference type="Rhea" id="RHEA:21257"/>
    </physiologicalReaction>
</comment>
<comment type="pathway">
    <text evidence="1">Metabolic intermediate biosynthesis; chorismate biosynthesis; chorismate from D-erythrose 4-phosphate and phosphoenolpyruvate: step 6/7.</text>
</comment>
<comment type="subunit">
    <text evidence="1">Monomer.</text>
</comment>
<comment type="subcellular location">
    <subcellularLocation>
        <location evidence="1">Cytoplasm</location>
    </subcellularLocation>
</comment>
<comment type="similarity">
    <text evidence="1">Belongs to the EPSP synthase family.</text>
</comment>
<sequence length="428" mass="46203">MESLTLQPVSQINGEVNLPGSKSVSNRALLLAALAQGTTRLTNLLDSDDIRHMLNALKQLGVNYQLSTDKTVCEVEGLGSAFNASQALELYLGNAGTAMRPLAAALCLSQGEFVLTGEPRMKERPIGHLVDALRTAGADVTYLENENYPPLKITGTGLYGGEVEIDGSISSQFLTAFLMAAPLATADTVIRIKGDLVSKPYIDITLHIMAQFGVTVENRDYQEFFIPAGQTYQGAGDFLVEGDASSASYFLAAAAIKGGEVKVTGIGKKSIQGDVQFAHALEMMGAEIEWGDNYVIARRGELKAVDMDFNHIPDAAMTIAVAALFAEGTTSIRNVYNWRVKETDRLAAMATELRKVGAKVEEGNDYITIVPPTQLQHATIDTYDDHRMAMCFSLVALSDTPVTINDPKCTSKTFPDYFDKLAELSQPA</sequence>